<comment type="function">
    <text evidence="1">Produces ATP from ADP in the presence of a proton gradient across the membrane. The catalytic sites are hosted primarily by the beta subunits.</text>
</comment>
<comment type="catalytic activity">
    <reaction evidence="1">
        <text>ATP + H2O + 4 H(+)(in) = ADP + phosphate + 5 H(+)(out)</text>
        <dbReference type="Rhea" id="RHEA:57720"/>
        <dbReference type="ChEBI" id="CHEBI:15377"/>
        <dbReference type="ChEBI" id="CHEBI:15378"/>
        <dbReference type="ChEBI" id="CHEBI:30616"/>
        <dbReference type="ChEBI" id="CHEBI:43474"/>
        <dbReference type="ChEBI" id="CHEBI:456216"/>
        <dbReference type="EC" id="7.1.2.2"/>
    </reaction>
</comment>
<comment type="subunit">
    <text evidence="1">F-type ATPases have 2 components, CF(1) - the catalytic core - and CF(0) - the membrane proton channel. CF(1) has five subunits: alpha(3), beta(3), gamma(1), delta(1), epsilon(1). CF(0) has three main subunits: a(1), b(2) and c(9-12). The alpha and beta chains form an alternating ring which encloses part of the gamma chain. CF(1) is attached to CF(0) by a central stalk formed by the gamma and epsilon chains, while a peripheral stalk is formed by the delta and b chains.</text>
</comment>
<comment type="subcellular location">
    <subcellularLocation>
        <location evidence="1">Cell inner membrane</location>
        <topology evidence="1">Peripheral membrane protein</topology>
    </subcellularLocation>
</comment>
<comment type="similarity">
    <text evidence="1">Belongs to the ATPase alpha/beta chains family.</text>
</comment>
<sequence>MSIGNIVQCIGAVVDIEFPRDAMPKVYDALVLEDSGDASFAEKGLTFEVQQQLGDGVVRTIALGSSDGLRRGMEVKSTGAPISVPVGHGTLGRIMDVLGRPIDEAGPIASDELRAIHQKAPKFDELSPSVDLLETGIKVIDLVCPFAKGGKVGLFGGAGVGKTVNMMELINNIAKQHSGLSVFAGVGERTREGNDFYHEMKDSNVLDKVAMVFGQMNEPPGNRLRVALTGLTMAERFRDEGRDILFFVDNIYRYTLAGTEVSALLGRMPSAVGYQPTLAEEMGKLQERITSTKTGSITSIQAVYVPADDLTDPSPATTFLHLDSTVVLSRDIAALGIYPAVDPLDSTSRQLDPQVVGTEHYEVARRVQQTLQRYKELRDIIAILGMDELSPEDKLAVNRARKIQRFLSQPFHVAEVFTGSPGKYVPLKETIRGFKMLVDGECDHLPEQAFYMVGSIDEAFEKAKKLQ</sequence>
<organism>
    <name type="scientific">Cupriavidus necator (strain ATCC 17699 / DSM 428 / KCTC 22496 / NCIMB 10442 / H16 / Stanier 337)</name>
    <name type="common">Ralstonia eutropha</name>
    <dbReference type="NCBI Taxonomy" id="381666"/>
    <lineage>
        <taxon>Bacteria</taxon>
        <taxon>Pseudomonadati</taxon>
        <taxon>Pseudomonadota</taxon>
        <taxon>Betaproteobacteria</taxon>
        <taxon>Burkholderiales</taxon>
        <taxon>Burkholderiaceae</taxon>
        <taxon>Cupriavidus</taxon>
    </lineage>
</organism>
<protein>
    <recommendedName>
        <fullName evidence="1">ATP synthase subunit beta</fullName>
        <ecNumber evidence="1">7.1.2.2</ecNumber>
    </recommendedName>
    <alternativeName>
        <fullName evidence="1">ATP synthase F1 sector subunit beta</fullName>
    </alternativeName>
    <alternativeName>
        <fullName evidence="1">F-ATPase subunit beta</fullName>
    </alternativeName>
</protein>
<feature type="chain" id="PRO_1000055149" description="ATP synthase subunit beta">
    <location>
        <begin position="1"/>
        <end position="467"/>
    </location>
</feature>
<feature type="binding site" evidence="1">
    <location>
        <begin position="156"/>
        <end position="163"/>
    </location>
    <ligand>
        <name>ATP</name>
        <dbReference type="ChEBI" id="CHEBI:30616"/>
    </ligand>
</feature>
<name>ATPB_CUPNH</name>
<reference key="1">
    <citation type="journal article" date="2006" name="Nat. Biotechnol.">
        <title>Genome sequence of the bioplastic-producing 'Knallgas' bacterium Ralstonia eutropha H16.</title>
        <authorList>
            <person name="Pohlmann A."/>
            <person name="Fricke W.F."/>
            <person name="Reinecke F."/>
            <person name="Kusian B."/>
            <person name="Liesegang H."/>
            <person name="Cramm R."/>
            <person name="Eitinger T."/>
            <person name="Ewering C."/>
            <person name="Poetter M."/>
            <person name="Schwartz E."/>
            <person name="Strittmatter A."/>
            <person name="Voss I."/>
            <person name="Gottschalk G."/>
            <person name="Steinbuechel A."/>
            <person name="Friedrich B."/>
            <person name="Bowien B."/>
        </authorList>
    </citation>
    <scope>NUCLEOTIDE SEQUENCE [LARGE SCALE GENOMIC DNA]</scope>
    <source>
        <strain>ATCC 17699 / DSM 428 / KCTC 22496 / NCIMB 10442 / H16 / Stanier 337</strain>
    </source>
</reference>
<dbReference type="EC" id="7.1.2.2" evidence="1"/>
<dbReference type="EMBL" id="AM260479">
    <property type="protein sequence ID" value="CAJ94694.1"/>
    <property type="molecule type" value="Genomic_DNA"/>
</dbReference>
<dbReference type="RefSeq" id="WP_010811263.1">
    <property type="nucleotide sequence ID" value="NZ_CP039287.1"/>
</dbReference>
<dbReference type="SMR" id="Q0K5M7"/>
<dbReference type="STRING" id="381666.H16_A3637"/>
<dbReference type="KEGG" id="reh:H16_A3637"/>
<dbReference type="eggNOG" id="COG0055">
    <property type="taxonomic scope" value="Bacteria"/>
</dbReference>
<dbReference type="HOGENOM" id="CLU_022398_0_2_4"/>
<dbReference type="OrthoDB" id="9801639at2"/>
<dbReference type="Proteomes" id="UP000008210">
    <property type="component" value="Chromosome 1"/>
</dbReference>
<dbReference type="GO" id="GO:0005886">
    <property type="term" value="C:plasma membrane"/>
    <property type="evidence" value="ECO:0007669"/>
    <property type="project" value="UniProtKB-SubCell"/>
</dbReference>
<dbReference type="GO" id="GO:0045259">
    <property type="term" value="C:proton-transporting ATP synthase complex"/>
    <property type="evidence" value="ECO:0007669"/>
    <property type="project" value="UniProtKB-KW"/>
</dbReference>
<dbReference type="GO" id="GO:0005524">
    <property type="term" value="F:ATP binding"/>
    <property type="evidence" value="ECO:0007669"/>
    <property type="project" value="UniProtKB-UniRule"/>
</dbReference>
<dbReference type="GO" id="GO:0016887">
    <property type="term" value="F:ATP hydrolysis activity"/>
    <property type="evidence" value="ECO:0007669"/>
    <property type="project" value="InterPro"/>
</dbReference>
<dbReference type="GO" id="GO:0046933">
    <property type="term" value="F:proton-transporting ATP synthase activity, rotational mechanism"/>
    <property type="evidence" value="ECO:0007669"/>
    <property type="project" value="UniProtKB-UniRule"/>
</dbReference>
<dbReference type="CDD" id="cd18110">
    <property type="entry name" value="ATP-synt_F1_beta_C"/>
    <property type="match status" value="1"/>
</dbReference>
<dbReference type="CDD" id="cd18115">
    <property type="entry name" value="ATP-synt_F1_beta_N"/>
    <property type="match status" value="1"/>
</dbReference>
<dbReference type="CDD" id="cd01133">
    <property type="entry name" value="F1-ATPase_beta_CD"/>
    <property type="match status" value="1"/>
</dbReference>
<dbReference type="FunFam" id="1.10.1140.10:FF:000001">
    <property type="entry name" value="ATP synthase subunit beta"/>
    <property type="match status" value="1"/>
</dbReference>
<dbReference type="FunFam" id="3.40.50.300:FF:000004">
    <property type="entry name" value="ATP synthase subunit beta"/>
    <property type="match status" value="1"/>
</dbReference>
<dbReference type="Gene3D" id="2.40.10.170">
    <property type="match status" value="1"/>
</dbReference>
<dbReference type="Gene3D" id="1.10.1140.10">
    <property type="entry name" value="Bovine Mitochondrial F1-atpase, Atp Synthase Beta Chain, Chain D, domain 3"/>
    <property type="match status" value="1"/>
</dbReference>
<dbReference type="Gene3D" id="3.40.50.300">
    <property type="entry name" value="P-loop containing nucleotide triphosphate hydrolases"/>
    <property type="match status" value="1"/>
</dbReference>
<dbReference type="HAMAP" id="MF_01347">
    <property type="entry name" value="ATP_synth_beta_bact"/>
    <property type="match status" value="1"/>
</dbReference>
<dbReference type="InterPro" id="IPR003593">
    <property type="entry name" value="AAA+_ATPase"/>
</dbReference>
<dbReference type="InterPro" id="IPR055190">
    <property type="entry name" value="ATP-synt_VA_C"/>
</dbReference>
<dbReference type="InterPro" id="IPR005722">
    <property type="entry name" value="ATP_synth_F1_bsu"/>
</dbReference>
<dbReference type="InterPro" id="IPR020003">
    <property type="entry name" value="ATPase_a/bsu_AS"/>
</dbReference>
<dbReference type="InterPro" id="IPR050053">
    <property type="entry name" value="ATPase_alpha/beta_chains"/>
</dbReference>
<dbReference type="InterPro" id="IPR004100">
    <property type="entry name" value="ATPase_F1/V1/A1_a/bsu_N"/>
</dbReference>
<dbReference type="InterPro" id="IPR036121">
    <property type="entry name" value="ATPase_F1/V1/A1_a/bsu_N_sf"/>
</dbReference>
<dbReference type="InterPro" id="IPR000194">
    <property type="entry name" value="ATPase_F1/V1/A1_a/bsu_nucl-bd"/>
</dbReference>
<dbReference type="InterPro" id="IPR024034">
    <property type="entry name" value="ATPase_F1/V1_b/a_C"/>
</dbReference>
<dbReference type="InterPro" id="IPR027417">
    <property type="entry name" value="P-loop_NTPase"/>
</dbReference>
<dbReference type="NCBIfam" id="TIGR01039">
    <property type="entry name" value="atpD"/>
    <property type="match status" value="1"/>
</dbReference>
<dbReference type="PANTHER" id="PTHR15184">
    <property type="entry name" value="ATP SYNTHASE"/>
    <property type="match status" value="1"/>
</dbReference>
<dbReference type="PANTHER" id="PTHR15184:SF71">
    <property type="entry name" value="ATP SYNTHASE SUBUNIT BETA, MITOCHONDRIAL"/>
    <property type="match status" value="1"/>
</dbReference>
<dbReference type="Pfam" id="PF00006">
    <property type="entry name" value="ATP-synt_ab"/>
    <property type="match status" value="1"/>
</dbReference>
<dbReference type="Pfam" id="PF02874">
    <property type="entry name" value="ATP-synt_ab_N"/>
    <property type="match status" value="1"/>
</dbReference>
<dbReference type="Pfam" id="PF22919">
    <property type="entry name" value="ATP-synt_VA_C"/>
    <property type="match status" value="1"/>
</dbReference>
<dbReference type="SMART" id="SM00382">
    <property type="entry name" value="AAA"/>
    <property type="match status" value="1"/>
</dbReference>
<dbReference type="SUPFAM" id="SSF47917">
    <property type="entry name" value="C-terminal domain of alpha and beta subunits of F1 ATP synthase"/>
    <property type="match status" value="1"/>
</dbReference>
<dbReference type="SUPFAM" id="SSF50615">
    <property type="entry name" value="N-terminal domain of alpha and beta subunits of F1 ATP synthase"/>
    <property type="match status" value="1"/>
</dbReference>
<dbReference type="SUPFAM" id="SSF52540">
    <property type="entry name" value="P-loop containing nucleoside triphosphate hydrolases"/>
    <property type="match status" value="1"/>
</dbReference>
<dbReference type="PROSITE" id="PS00152">
    <property type="entry name" value="ATPASE_ALPHA_BETA"/>
    <property type="match status" value="1"/>
</dbReference>
<accession>Q0K5M7</accession>
<proteinExistence type="inferred from homology"/>
<gene>
    <name evidence="1" type="primary">atpD</name>
    <name type="ordered locus">H16_A3637</name>
</gene>
<evidence type="ECO:0000255" key="1">
    <source>
        <dbReference type="HAMAP-Rule" id="MF_01347"/>
    </source>
</evidence>
<keyword id="KW-0066">ATP synthesis</keyword>
<keyword id="KW-0067">ATP-binding</keyword>
<keyword id="KW-0997">Cell inner membrane</keyword>
<keyword id="KW-1003">Cell membrane</keyword>
<keyword id="KW-0139">CF(1)</keyword>
<keyword id="KW-0375">Hydrogen ion transport</keyword>
<keyword id="KW-0406">Ion transport</keyword>
<keyword id="KW-0472">Membrane</keyword>
<keyword id="KW-0547">Nucleotide-binding</keyword>
<keyword id="KW-1185">Reference proteome</keyword>
<keyword id="KW-1278">Translocase</keyword>
<keyword id="KW-0813">Transport</keyword>